<evidence type="ECO:0000255" key="1">
    <source>
        <dbReference type="HAMAP-Rule" id="MF_00386"/>
    </source>
</evidence>
<sequence length="85" mass="9907">MVKLSTIVVFCLTFFVSIYQNYISFFMPSNCRFYPTCSTYMILSLRKFGVIKGIILTILRLFKCHPLHQGGEDLVPLKIKDKSEY</sequence>
<organism>
    <name type="scientific">Buchnera aphidicola subsp. Schizaphis graminum (strain Sg)</name>
    <dbReference type="NCBI Taxonomy" id="198804"/>
    <lineage>
        <taxon>Bacteria</taxon>
        <taxon>Pseudomonadati</taxon>
        <taxon>Pseudomonadota</taxon>
        <taxon>Gammaproteobacteria</taxon>
        <taxon>Enterobacterales</taxon>
        <taxon>Erwiniaceae</taxon>
        <taxon>Buchnera</taxon>
    </lineage>
</organism>
<dbReference type="EMBL" id="M80817">
    <property type="protein sequence ID" value="AAA73146.1"/>
    <property type="molecule type" value="Genomic_DNA"/>
</dbReference>
<dbReference type="EMBL" id="AF008210">
    <property type="protein sequence ID" value="AAC38103.1"/>
    <property type="molecule type" value="Genomic_DNA"/>
</dbReference>
<dbReference type="EMBL" id="AE013218">
    <property type="protein sequence ID" value="AAM67587.1"/>
    <property type="molecule type" value="Genomic_DNA"/>
</dbReference>
<dbReference type="PIR" id="JC1156">
    <property type="entry name" value="JC1156"/>
</dbReference>
<dbReference type="RefSeq" id="WP_011053553.1">
    <property type="nucleotide sequence ID" value="NC_004061.1"/>
</dbReference>
<dbReference type="STRING" id="198804.BUsg_015"/>
<dbReference type="GeneID" id="93003477"/>
<dbReference type="KEGG" id="bas:BUsg_015"/>
<dbReference type="eggNOG" id="COG0759">
    <property type="taxonomic scope" value="Bacteria"/>
</dbReference>
<dbReference type="HOGENOM" id="CLU_144811_5_1_6"/>
<dbReference type="Proteomes" id="UP000000416">
    <property type="component" value="Chromosome"/>
</dbReference>
<dbReference type="GO" id="GO:0005886">
    <property type="term" value="C:plasma membrane"/>
    <property type="evidence" value="ECO:0007669"/>
    <property type="project" value="UniProtKB-SubCell"/>
</dbReference>
<dbReference type="HAMAP" id="MF_00386">
    <property type="entry name" value="UPF0161_YidD"/>
    <property type="match status" value="1"/>
</dbReference>
<dbReference type="InterPro" id="IPR002696">
    <property type="entry name" value="Membr_insert_effic_factor_YidD"/>
</dbReference>
<dbReference type="NCBIfam" id="TIGR00278">
    <property type="entry name" value="membrane protein insertion efficiency factor YidD"/>
    <property type="match status" value="1"/>
</dbReference>
<dbReference type="PANTHER" id="PTHR33383">
    <property type="entry name" value="MEMBRANE PROTEIN INSERTION EFFICIENCY FACTOR-RELATED"/>
    <property type="match status" value="1"/>
</dbReference>
<dbReference type="PANTHER" id="PTHR33383:SF1">
    <property type="entry name" value="MEMBRANE PROTEIN INSERTION EFFICIENCY FACTOR-RELATED"/>
    <property type="match status" value="1"/>
</dbReference>
<dbReference type="Pfam" id="PF01809">
    <property type="entry name" value="YidD"/>
    <property type="match status" value="1"/>
</dbReference>
<dbReference type="SMART" id="SM01234">
    <property type="entry name" value="Haemolytic"/>
    <property type="match status" value="1"/>
</dbReference>
<accession>P29432</accession>
<gene>
    <name type="ordered locus">BUsg_015</name>
</gene>
<protein>
    <recommendedName>
        <fullName evidence="1">Putative membrane protein insertion efficiency factor</fullName>
    </recommendedName>
</protein>
<keyword id="KW-1003">Cell membrane</keyword>
<keyword id="KW-0472">Membrane</keyword>
<name>YIDD_BUCAP</name>
<proteinExistence type="inferred from homology"/>
<reference key="1">
    <citation type="journal article" date="1992" name="Gene">
        <title>Genetic analysis of an aphid endosymbiont DNA fragment homologous to the rnpA-rpmH-dnaA-dnaN-gyrB region of eubacteria.</title>
        <authorList>
            <person name="Lai C.-Y."/>
            <person name="Baumann P."/>
        </authorList>
    </citation>
    <scope>NUCLEOTIDE SEQUENCE [GENOMIC DNA]</scope>
</reference>
<reference key="2">
    <citation type="journal article" date="1998" name="Curr. Microbiol.">
        <title>Sequence analysis of a 34.7-kb DNA segment from the genome of Buchnera aphidicola (endosymbiont of aphids) containing groEL, dnaA, the atp operon, gidA, and rho.</title>
        <authorList>
            <person name="Clark M.A."/>
            <person name="Baumann L."/>
            <person name="Baumann P."/>
        </authorList>
    </citation>
    <scope>NUCLEOTIDE SEQUENCE [GENOMIC DNA]</scope>
</reference>
<reference key="3">
    <citation type="journal article" date="2002" name="Science">
        <title>50 million years of genomic stasis in endosymbiotic bacteria.</title>
        <authorList>
            <person name="Tamas I."/>
            <person name="Klasson L."/>
            <person name="Canbaeck B."/>
            <person name="Naeslund A.K."/>
            <person name="Eriksson A.-S."/>
            <person name="Wernegreen J.J."/>
            <person name="Sandstroem J.P."/>
            <person name="Moran N.A."/>
            <person name="Andersson S.G.E."/>
        </authorList>
    </citation>
    <scope>NUCLEOTIDE SEQUENCE [LARGE SCALE GENOMIC DNA]</scope>
    <source>
        <strain>Sg</strain>
    </source>
</reference>
<comment type="function">
    <text evidence="1">Could be involved in insertion of integral membrane proteins into the membrane.</text>
</comment>
<comment type="subcellular location">
    <subcellularLocation>
        <location evidence="1">Cell membrane</location>
        <topology evidence="1">Peripheral membrane protein</topology>
        <orientation evidence="1">Cytoplasmic side</orientation>
    </subcellularLocation>
</comment>
<comment type="similarity">
    <text evidence="1">Belongs to the UPF0161 family.</text>
</comment>
<feature type="chain" id="PRO_0000171803" description="Putative membrane protein insertion efficiency factor">
    <location>
        <begin position="1"/>
        <end position="85"/>
    </location>
</feature>